<dbReference type="EMBL" id="CU329670">
    <property type="protein sequence ID" value="CAA20144.2"/>
    <property type="molecule type" value="Genomic_DNA"/>
</dbReference>
<dbReference type="PIR" id="T41709">
    <property type="entry name" value="T41709"/>
</dbReference>
<dbReference type="RefSeq" id="NP_593964.2">
    <property type="nucleotide sequence ID" value="NM_001019391.2"/>
</dbReference>
<dbReference type="PDB" id="4S3H">
    <property type="method" value="X-ray"/>
    <property type="resolution" value="2.70 A"/>
    <property type="chains" value="A/B/C/D=1-104"/>
</dbReference>
<dbReference type="PDB" id="6HM4">
    <property type="method" value="X-ray"/>
    <property type="resolution" value="1.77 A"/>
    <property type="chains" value="B=106-120"/>
</dbReference>
<dbReference type="PDB" id="7P0J">
    <property type="method" value="X-ray"/>
    <property type="resolution" value="1.48 A"/>
    <property type="chains" value="A=384-581"/>
</dbReference>
<dbReference type="PDB" id="7P0L">
    <property type="method" value="X-ray"/>
    <property type="resolution" value="1.97 A"/>
    <property type="chains" value="A/B=384-581"/>
</dbReference>
<dbReference type="PDBsum" id="4S3H"/>
<dbReference type="PDBsum" id="6HM4"/>
<dbReference type="PDBsum" id="7P0J"/>
<dbReference type="PDBsum" id="7P0L"/>
<dbReference type="SMR" id="O14079"/>
<dbReference type="BioGRID" id="278975">
    <property type="interactions" value="8"/>
</dbReference>
<dbReference type="FunCoup" id="O14079">
    <property type="interactions" value="7"/>
</dbReference>
<dbReference type="STRING" id="284812.O14079"/>
<dbReference type="iPTMnet" id="O14079"/>
<dbReference type="PaxDb" id="4896-SPACUNK4.14.1"/>
<dbReference type="EnsemblFungi" id="SPACUNK4.14.1">
    <property type="protein sequence ID" value="SPACUNK4.14.1:pep"/>
    <property type="gene ID" value="SPACUNK4.14"/>
</dbReference>
<dbReference type="GeneID" id="2542517"/>
<dbReference type="KEGG" id="spo:2542517"/>
<dbReference type="PomBase" id="SPACUNK4.14">
    <property type="gene designation" value="mdb1"/>
</dbReference>
<dbReference type="VEuPathDB" id="FungiDB:SPACUNK4.14"/>
<dbReference type="eggNOG" id="KOG2043">
    <property type="taxonomic scope" value="Eukaryota"/>
</dbReference>
<dbReference type="HOGENOM" id="CLU_430308_0_0_1"/>
<dbReference type="InParanoid" id="O14079"/>
<dbReference type="OMA" id="HSHACIN"/>
<dbReference type="PRO" id="PR:O14079"/>
<dbReference type="Proteomes" id="UP000002485">
    <property type="component" value="Chromosome I"/>
</dbReference>
<dbReference type="GO" id="GO:0005737">
    <property type="term" value="C:cytoplasm"/>
    <property type="evidence" value="ECO:0007669"/>
    <property type="project" value="UniProtKB-KW"/>
</dbReference>
<dbReference type="GO" id="GO:1990023">
    <property type="term" value="C:mitotic spindle midzone"/>
    <property type="evidence" value="ECO:0000314"/>
    <property type="project" value="PomBase"/>
</dbReference>
<dbReference type="GO" id="GO:0005634">
    <property type="term" value="C:nucleus"/>
    <property type="evidence" value="ECO:0000314"/>
    <property type="project" value="PomBase"/>
</dbReference>
<dbReference type="GO" id="GO:0035861">
    <property type="term" value="C:site of double-strand break"/>
    <property type="evidence" value="ECO:0000314"/>
    <property type="project" value="PomBase"/>
</dbReference>
<dbReference type="GO" id="GO:0007095">
    <property type="term" value="P:mitotic G2 DNA damage checkpoint signaling"/>
    <property type="evidence" value="ECO:0000250"/>
    <property type="project" value="PomBase"/>
</dbReference>
<dbReference type="CDD" id="cd17744">
    <property type="entry name" value="BRCT_MDC1_rpt1"/>
    <property type="match status" value="1"/>
</dbReference>
<dbReference type="FunFam" id="3.40.50.10190:FF:000195">
    <property type="entry name" value="DNA damage response protein Mdb1"/>
    <property type="match status" value="1"/>
</dbReference>
<dbReference type="Gene3D" id="3.40.50.10190">
    <property type="entry name" value="BRCT domain"/>
    <property type="match status" value="2"/>
</dbReference>
<dbReference type="InterPro" id="IPR001357">
    <property type="entry name" value="BRCT_dom"/>
</dbReference>
<dbReference type="InterPro" id="IPR036420">
    <property type="entry name" value="BRCT_dom_sf"/>
</dbReference>
<dbReference type="InterPro" id="IPR051579">
    <property type="entry name" value="DDR_Transcriptional_Reg"/>
</dbReference>
<dbReference type="PANTHER" id="PTHR23196">
    <property type="entry name" value="PAX TRANSCRIPTION ACTIVATION DOMAIN INTERACTING PROTEIN"/>
    <property type="match status" value="1"/>
</dbReference>
<dbReference type="PANTHER" id="PTHR23196:SF1">
    <property type="entry name" value="PAX-INTERACTING PROTEIN 1"/>
    <property type="match status" value="1"/>
</dbReference>
<dbReference type="Pfam" id="PF00533">
    <property type="entry name" value="BRCT"/>
    <property type="match status" value="1"/>
</dbReference>
<dbReference type="SMART" id="SM00292">
    <property type="entry name" value="BRCT"/>
    <property type="match status" value="1"/>
</dbReference>
<dbReference type="SUPFAM" id="SSF52113">
    <property type="entry name" value="BRCT domain"/>
    <property type="match status" value="1"/>
</dbReference>
<dbReference type="PROSITE" id="PS50172">
    <property type="entry name" value="BRCT"/>
    <property type="match status" value="1"/>
</dbReference>
<gene>
    <name evidence="8" type="primary">mdb1</name>
    <name evidence="11" type="ORF">SPAC2E11.14</name>
    <name evidence="10 12" type="ORF">SPACUNK4.14</name>
</gene>
<feature type="chain" id="PRO_0000116712" description="DNA damage response protein Mdb1">
    <location>
        <begin position="1"/>
        <end position="624"/>
    </location>
</feature>
<feature type="domain" description="BRCT" evidence="2">
    <location>
        <begin position="376"/>
        <end position="468"/>
    </location>
</feature>
<feature type="region of interest" description="Disordered" evidence="3">
    <location>
        <begin position="177"/>
        <end position="237"/>
    </location>
</feature>
<feature type="region of interest" description="Disordered" evidence="3">
    <location>
        <begin position="249"/>
        <end position="386"/>
    </location>
</feature>
<feature type="region of interest" description="Disordered" evidence="3">
    <location>
        <begin position="591"/>
        <end position="624"/>
    </location>
</feature>
<feature type="compositionally biased region" description="Basic and acidic residues" evidence="3">
    <location>
        <begin position="200"/>
        <end position="217"/>
    </location>
</feature>
<feature type="compositionally biased region" description="Basic and acidic residues" evidence="3">
    <location>
        <begin position="225"/>
        <end position="235"/>
    </location>
</feature>
<feature type="compositionally biased region" description="Polar residues" evidence="3">
    <location>
        <begin position="250"/>
        <end position="263"/>
    </location>
</feature>
<feature type="compositionally biased region" description="Low complexity" evidence="3">
    <location>
        <begin position="294"/>
        <end position="305"/>
    </location>
</feature>
<feature type="compositionally biased region" description="Basic and acidic residues" evidence="3">
    <location>
        <begin position="306"/>
        <end position="316"/>
    </location>
</feature>
<feature type="compositionally biased region" description="Basic and acidic residues" evidence="3">
    <location>
        <begin position="325"/>
        <end position="352"/>
    </location>
</feature>
<feature type="compositionally biased region" description="Polar residues" evidence="3">
    <location>
        <begin position="356"/>
        <end position="386"/>
    </location>
</feature>
<feature type="modified residue" description="Phosphoserine" evidence="5">
    <location>
        <position position="253"/>
    </location>
</feature>
<feature type="modified residue" description="Phosphoserine" evidence="5">
    <location>
        <position position="283"/>
    </location>
</feature>
<feature type="mutagenesis site" description="Loss of in vitro interaction with phosphorylated hta1 peptide containing the S/T-Q motif. Completely abolishes both spontaneous and ionizing radiation induced foci (IRIF) formation at nuclear DNA double strand breaks (DSBs). Loss of mitotic spindle midzone localization during anaphase. Cannot reverse the thiabendazole (TBZ) resistant phenotype of the deletion mutant of this protein." evidence="7">
    <location>
        <begin position="1"/>
        <end position="104"/>
    </location>
</feature>
<feature type="mutagenesis site" description="Can form a homodimer. Loss of in vitro interaction with phosphorylated hta1 peptide containing the S/T-Q motif." evidence="7">
    <location>
        <begin position="105"/>
        <end position="624"/>
    </location>
</feature>
<feature type="mutagenesis site" description="Loss of in vitro interaction with phosphorylated hta1 peptide containing the S/T-Q motif. Abolishes ionizing radiation induced foci (IRIF) formation at nuclear DNA double strand breaks (DSBs). Localizes to mitotic spindle during early mitosis. Loss of midzone localization during late mitosis. Cannot reverse the thiabendazole (TBZ) resistant phenotype of the deletion mutant of this protein." evidence="6">
    <original>S</original>
    <variation>A</variation>
    <location>
        <position position="392"/>
    </location>
</feature>
<feature type="mutagenesis site" description="Loss of in vitro interaction with phosphorylated hta1 peptide containing the S/T-Q motif. Abolishes ionizing radiation induced foci (IRIF) formation at nuclear DNA double strand breaks (DSBs). Loss of localization to mitotic spindle and midzone during early and late mitosis, respectively. Cannot reverse the thiabendazole (TBZ) resistant phenotype of the deletion mutant of this protein." evidence="6">
    <original>K</original>
    <variation>M</variation>
    <location>
        <position position="434"/>
    </location>
</feature>
<feature type="strand" evidence="13">
    <location>
        <begin position="2"/>
        <end position="5"/>
    </location>
</feature>
<feature type="strand" evidence="13">
    <location>
        <begin position="8"/>
        <end position="11"/>
    </location>
</feature>
<feature type="strand" evidence="13">
    <location>
        <begin position="14"/>
        <end position="20"/>
    </location>
</feature>
<feature type="strand" evidence="13">
    <location>
        <begin position="27"/>
        <end position="29"/>
    </location>
</feature>
<feature type="strand" evidence="13">
    <location>
        <begin position="34"/>
        <end position="41"/>
    </location>
</feature>
<feature type="strand" evidence="13">
    <location>
        <begin position="44"/>
        <end position="52"/>
    </location>
</feature>
<feature type="strand" evidence="13">
    <location>
        <begin position="54"/>
        <end position="56"/>
    </location>
</feature>
<feature type="strand" evidence="13">
    <location>
        <begin position="68"/>
        <end position="73"/>
    </location>
</feature>
<feature type="strand" evidence="13">
    <location>
        <begin position="80"/>
        <end position="82"/>
    </location>
</feature>
<feature type="strand" evidence="13">
    <location>
        <begin position="85"/>
        <end position="90"/>
    </location>
</feature>
<feature type="strand" evidence="14">
    <location>
        <begin position="388"/>
        <end position="393"/>
    </location>
</feature>
<feature type="helix" evidence="14">
    <location>
        <begin position="398"/>
        <end position="406"/>
    </location>
</feature>
<feature type="strand" evidence="14">
    <location>
        <begin position="421"/>
        <end position="424"/>
    </location>
</feature>
<feature type="strand" evidence="14">
    <location>
        <begin position="426"/>
        <end position="428"/>
    </location>
</feature>
<feature type="helix" evidence="14">
    <location>
        <begin position="433"/>
        <end position="441"/>
    </location>
</feature>
<feature type="strand" evidence="14">
    <location>
        <begin position="445"/>
        <end position="447"/>
    </location>
</feature>
<feature type="helix" evidence="14">
    <location>
        <begin position="449"/>
        <end position="457"/>
    </location>
</feature>
<feature type="helix" evidence="14">
    <location>
        <begin position="463"/>
        <end position="466"/>
    </location>
</feature>
<feature type="helix" evidence="14">
    <location>
        <begin position="471"/>
        <end position="477"/>
    </location>
</feature>
<feature type="turn" evidence="14">
    <location>
        <begin position="489"/>
        <end position="492"/>
    </location>
</feature>
<feature type="strand" evidence="14">
    <location>
        <begin position="494"/>
        <end position="497"/>
    </location>
</feature>
<feature type="helix" evidence="14">
    <location>
        <begin position="499"/>
        <end position="504"/>
    </location>
</feature>
<feature type="turn" evidence="14">
    <location>
        <begin position="505"/>
        <end position="507"/>
    </location>
</feature>
<feature type="helix" evidence="14">
    <location>
        <begin position="508"/>
        <end position="519"/>
    </location>
</feature>
<feature type="strand" evidence="14">
    <location>
        <begin position="523"/>
        <end position="525"/>
    </location>
</feature>
<feature type="helix" evidence="14">
    <location>
        <begin position="530"/>
        <end position="532"/>
    </location>
</feature>
<feature type="strand" evidence="14">
    <location>
        <begin position="537"/>
        <end position="539"/>
    </location>
</feature>
<feature type="strand" evidence="14">
    <location>
        <begin position="542"/>
        <end position="544"/>
    </location>
</feature>
<feature type="helix" evidence="14">
    <location>
        <begin position="546"/>
        <end position="553"/>
    </location>
</feature>
<feature type="strand" evidence="15">
    <location>
        <begin position="558"/>
        <end position="560"/>
    </location>
</feature>
<feature type="helix" evidence="14">
    <location>
        <begin position="563"/>
        <end position="570"/>
    </location>
</feature>
<feature type="helix" evidence="14">
    <location>
        <begin position="575"/>
        <end position="578"/>
    </location>
</feature>
<name>MDB1_SCHPO</name>
<reference key="1">
    <citation type="journal article" date="2002" name="Nature">
        <title>The genome sequence of Schizosaccharomyces pombe.</title>
        <authorList>
            <person name="Wood V."/>
            <person name="Gwilliam R."/>
            <person name="Rajandream M.A."/>
            <person name="Lyne M.H."/>
            <person name="Lyne R."/>
            <person name="Stewart A."/>
            <person name="Sgouros J.G."/>
            <person name="Peat N."/>
            <person name="Hayles J."/>
            <person name="Baker S.G."/>
            <person name="Basham D."/>
            <person name="Bowman S."/>
            <person name="Brooks K."/>
            <person name="Brown D."/>
            <person name="Brown S."/>
            <person name="Chillingworth T."/>
            <person name="Churcher C.M."/>
            <person name="Collins M."/>
            <person name="Connor R."/>
            <person name="Cronin A."/>
            <person name="Davis P."/>
            <person name="Feltwell T."/>
            <person name="Fraser A."/>
            <person name="Gentles S."/>
            <person name="Goble A."/>
            <person name="Hamlin N."/>
            <person name="Harris D.E."/>
            <person name="Hidalgo J."/>
            <person name="Hodgson G."/>
            <person name="Holroyd S."/>
            <person name="Hornsby T."/>
            <person name="Howarth S."/>
            <person name="Huckle E.J."/>
            <person name="Hunt S."/>
            <person name="Jagels K."/>
            <person name="James K.D."/>
            <person name="Jones L."/>
            <person name="Jones M."/>
            <person name="Leather S."/>
            <person name="McDonald S."/>
            <person name="McLean J."/>
            <person name="Mooney P."/>
            <person name="Moule S."/>
            <person name="Mungall K.L."/>
            <person name="Murphy L.D."/>
            <person name="Niblett D."/>
            <person name="Odell C."/>
            <person name="Oliver K."/>
            <person name="O'Neil S."/>
            <person name="Pearson D."/>
            <person name="Quail M.A."/>
            <person name="Rabbinowitsch E."/>
            <person name="Rutherford K.M."/>
            <person name="Rutter S."/>
            <person name="Saunders D."/>
            <person name="Seeger K."/>
            <person name="Sharp S."/>
            <person name="Skelton J."/>
            <person name="Simmonds M.N."/>
            <person name="Squares R."/>
            <person name="Squares S."/>
            <person name="Stevens K."/>
            <person name="Taylor K."/>
            <person name="Taylor R.G."/>
            <person name="Tivey A."/>
            <person name="Walsh S.V."/>
            <person name="Warren T."/>
            <person name="Whitehead S."/>
            <person name="Woodward J.R."/>
            <person name="Volckaert G."/>
            <person name="Aert R."/>
            <person name="Robben J."/>
            <person name="Grymonprez B."/>
            <person name="Weltjens I."/>
            <person name="Vanstreels E."/>
            <person name="Rieger M."/>
            <person name="Schaefer M."/>
            <person name="Mueller-Auer S."/>
            <person name="Gabel C."/>
            <person name="Fuchs M."/>
            <person name="Duesterhoeft A."/>
            <person name="Fritzc C."/>
            <person name="Holzer E."/>
            <person name="Moestl D."/>
            <person name="Hilbert H."/>
            <person name="Borzym K."/>
            <person name="Langer I."/>
            <person name="Beck A."/>
            <person name="Lehrach H."/>
            <person name="Reinhardt R."/>
            <person name="Pohl T.M."/>
            <person name="Eger P."/>
            <person name="Zimmermann W."/>
            <person name="Wedler H."/>
            <person name="Wambutt R."/>
            <person name="Purnelle B."/>
            <person name="Goffeau A."/>
            <person name="Cadieu E."/>
            <person name="Dreano S."/>
            <person name="Gloux S."/>
            <person name="Lelaure V."/>
            <person name="Mottier S."/>
            <person name="Galibert F."/>
            <person name="Aves S.J."/>
            <person name="Xiang Z."/>
            <person name="Hunt C."/>
            <person name="Moore K."/>
            <person name="Hurst S.M."/>
            <person name="Lucas M."/>
            <person name="Rochet M."/>
            <person name="Gaillardin C."/>
            <person name="Tallada V.A."/>
            <person name="Garzon A."/>
            <person name="Thode G."/>
            <person name="Daga R.R."/>
            <person name="Cruzado L."/>
            <person name="Jimenez J."/>
            <person name="Sanchez M."/>
            <person name="del Rey F."/>
            <person name="Benito J."/>
            <person name="Dominguez A."/>
            <person name="Revuelta J.L."/>
            <person name="Moreno S."/>
            <person name="Armstrong J."/>
            <person name="Forsburg S.L."/>
            <person name="Cerutti L."/>
            <person name="Lowe T."/>
            <person name="McCombie W.R."/>
            <person name="Paulsen I."/>
            <person name="Potashkin J."/>
            <person name="Shpakovski G.V."/>
            <person name="Ussery D."/>
            <person name="Barrell B.G."/>
            <person name="Nurse P."/>
        </authorList>
    </citation>
    <scope>NUCLEOTIDE SEQUENCE [LARGE SCALE GENOMIC DNA]</scope>
    <source>
        <strain>972 / ATCC 24843</strain>
    </source>
</reference>
<reference key="2">
    <citation type="journal article" date="2011" name="Science">
        <title>Comparative functional genomics of the fission yeasts.</title>
        <authorList>
            <person name="Rhind N."/>
            <person name="Chen Z."/>
            <person name="Yassour M."/>
            <person name="Thompson D.A."/>
            <person name="Haas B.J."/>
            <person name="Habib N."/>
            <person name="Wapinski I."/>
            <person name="Roy S."/>
            <person name="Lin M.F."/>
            <person name="Heiman D.I."/>
            <person name="Young S.K."/>
            <person name="Furuya K."/>
            <person name="Guo Y."/>
            <person name="Pidoux A."/>
            <person name="Chen H.M."/>
            <person name="Robbertse B."/>
            <person name="Goldberg J.M."/>
            <person name="Aoki K."/>
            <person name="Bayne E.H."/>
            <person name="Berlin A.M."/>
            <person name="Desjardins C.A."/>
            <person name="Dobbs E."/>
            <person name="Dukaj L."/>
            <person name="Fan L."/>
            <person name="FitzGerald M.G."/>
            <person name="French C."/>
            <person name="Gujja S."/>
            <person name="Hansen K."/>
            <person name="Keifenheim D."/>
            <person name="Levin J.Z."/>
            <person name="Mosher R.A."/>
            <person name="Mueller C.A."/>
            <person name="Pfiffner J."/>
            <person name="Priest M."/>
            <person name="Russ C."/>
            <person name="Smialowska A."/>
            <person name="Swoboda P."/>
            <person name="Sykes S.M."/>
            <person name="Vaughn M."/>
            <person name="Vengrova S."/>
            <person name="Yoder R."/>
            <person name="Zeng Q."/>
            <person name="Allshire R."/>
            <person name="Baulcombe D."/>
            <person name="Birren B.W."/>
            <person name="Brown W."/>
            <person name="Ekwall K."/>
            <person name="Kellis M."/>
            <person name="Leatherwood J."/>
            <person name="Levin H."/>
            <person name="Margalit H."/>
            <person name="Martienssen R."/>
            <person name="Nieduszynski C.A."/>
            <person name="Spatafora J.W."/>
            <person name="Friedman N."/>
            <person name="Dalgaard J.Z."/>
            <person name="Baumann P."/>
            <person name="Niki H."/>
            <person name="Regev A."/>
            <person name="Nusbaum C."/>
        </authorList>
    </citation>
    <scope>REVISION OF GENE MODEL</scope>
</reference>
<reference key="3">
    <citation type="journal article" date="2006" name="Nat. Biotechnol.">
        <title>ORFeome cloning and global analysis of protein localization in the fission yeast Schizosaccharomyces pombe.</title>
        <authorList>
            <person name="Matsuyama A."/>
            <person name="Arai R."/>
            <person name="Yashiroda Y."/>
            <person name="Shirai A."/>
            <person name="Kamata A."/>
            <person name="Sekido S."/>
            <person name="Kobayashi Y."/>
            <person name="Hashimoto A."/>
            <person name="Hamamoto M."/>
            <person name="Hiraoka Y."/>
            <person name="Horinouchi S."/>
            <person name="Yoshida M."/>
        </authorList>
    </citation>
    <scope>SUBCELLULAR LOCATION [LARGE SCALE ANALYSIS]</scope>
</reference>
<reference key="4">
    <citation type="journal article" date="2008" name="J. Proteome Res.">
        <title>Phosphoproteome analysis of fission yeast.</title>
        <authorList>
            <person name="Wilson-Grady J.T."/>
            <person name="Villen J."/>
            <person name="Gygi S.P."/>
        </authorList>
    </citation>
    <scope>PHOSPHORYLATION [LARGE SCALE ANALYSIS] AT SER-253 AND SER-283</scope>
    <scope>IDENTIFICATION BY MASS SPECTROMETRY</scope>
</reference>
<reference key="5">
    <citation type="journal article" date="2011" name="Genetics">
        <title>Augmented annotation of the Schizosaccharomyces pombe genome reveals additional genes required for growth and viability.</title>
        <authorList>
            <person name="Bitton D.A."/>
            <person name="Wood V."/>
            <person name="Scutt P.J."/>
            <person name="Grallert A."/>
            <person name="Yates T."/>
            <person name="Smith D.L."/>
            <person name="Hagan I.M."/>
            <person name="Miller C.J."/>
        </authorList>
    </citation>
    <scope>REVISION OF GENE MODEL</scope>
</reference>
<reference key="6">
    <citation type="journal article" date="2014" name="PLoS ONE">
        <title>Mdb1, a fission yeast homolog of human MDC1, modulates DNA damage response and mitotic spindle function.</title>
        <authorList>
            <person name="Wei Y."/>
            <person name="Wang H.T."/>
            <person name="Zhai Y."/>
            <person name="Russell P."/>
            <person name="Du L.L."/>
        </authorList>
    </citation>
    <scope>FUNCTION</scope>
    <scope>INTERACTION WITH HTA1</scope>
    <scope>SUBCELLULAR LOCATION</scope>
    <scope>DOMAIN</scope>
    <scope>DISRUPTION PHENOTYPE</scope>
    <scope>MUTAGENESIS OF SER-392 AND LYS-434</scope>
</reference>
<reference key="7">
    <citation type="journal article" date="2015" name="J. Biol. Chem.">
        <title>Dimerization mediated by a divergent forkhead-associated domain is essential for the DNA damage and spindle functions of fission yeast Mdb1.</title>
        <authorList>
            <person name="Luo S."/>
            <person name="Xin X."/>
            <person name="Du L.L."/>
            <person name="Ye K."/>
            <person name="Wei Y."/>
        </authorList>
    </citation>
    <scope>X-RAY CRYSTALLOGRAPHY (2.7 ANGSTROMS) OF 1-104</scope>
    <scope>IDENTIFICATION BY MASS SPECTROMETRY</scope>
    <scope>SUBUNIT</scope>
    <scope>INTERACTION WITH HTA1</scope>
    <scope>SUBCELLULAR LOCATION</scope>
    <scope>DOMAIN</scope>
    <scope>MUTAGENESIS OF 1-MET--LYS-104 AND 105-MET--THR-624</scope>
</reference>
<evidence type="ECO:0000250" key="1">
    <source>
        <dbReference type="UniProtKB" id="Q14676"/>
    </source>
</evidence>
<evidence type="ECO:0000255" key="2">
    <source>
        <dbReference type="PROSITE-ProRule" id="PRU00033"/>
    </source>
</evidence>
<evidence type="ECO:0000256" key="3">
    <source>
        <dbReference type="SAM" id="MobiDB-lite"/>
    </source>
</evidence>
<evidence type="ECO:0000269" key="4">
    <source>
    </source>
</evidence>
<evidence type="ECO:0000269" key="5">
    <source>
    </source>
</evidence>
<evidence type="ECO:0000269" key="6">
    <source>
    </source>
</evidence>
<evidence type="ECO:0000269" key="7">
    <source>
    </source>
</evidence>
<evidence type="ECO:0000303" key="8">
    <source>
    </source>
</evidence>
<evidence type="ECO:0000305" key="9"/>
<evidence type="ECO:0000312" key="10">
    <source>
        <dbReference type="EMBL" id="CAA20144.2"/>
    </source>
</evidence>
<evidence type="ECO:0000312" key="11">
    <source>
        <dbReference type="PDB" id="4S3H"/>
    </source>
</evidence>
<evidence type="ECO:0000312" key="12">
    <source>
        <dbReference type="PomBase" id="SPACUNK4.14"/>
    </source>
</evidence>
<evidence type="ECO:0007829" key="13">
    <source>
        <dbReference type="PDB" id="4S3H"/>
    </source>
</evidence>
<evidence type="ECO:0007829" key="14">
    <source>
        <dbReference type="PDB" id="7P0J"/>
    </source>
</evidence>
<evidence type="ECO:0007829" key="15">
    <source>
        <dbReference type="PDB" id="7P0L"/>
    </source>
</evidence>
<accession>O14079</accession>
<proteinExistence type="evidence at protein level"/>
<protein>
    <recommendedName>
        <fullName evidence="9">DNA damage response protein Mdb1</fullName>
    </recommendedName>
    <alternativeName>
        <fullName evidence="12">BRCT domain protein Mdb1</fullName>
    </alternativeName>
    <alternativeName>
        <fullName evidence="8">Midzone and DNA break-localizing protein 1</fullName>
    </alternativeName>
</protein>
<organism>
    <name type="scientific">Schizosaccharomyces pombe (strain 972 / ATCC 24843)</name>
    <name type="common">Fission yeast</name>
    <dbReference type="NCBI Taxonomy" id="284812"/>
    <lineage>
        <taxon>Eukaryota</taxon>
        <taxon>Fungi</taxon>
        <taxon>Dikarya</taxon>
        <taxon>Ascomycota</taxon>
        <taxon>Taphrinomycotina</taxon>
        <taxon>Schizosaccharomycetes</taxon>
        <taxon>Schizosaccharomycetales</taxon>
        <taxon>Schizosaccharomycetaceae</taxon>
        <taxon>Schizosaccharomyces</taxon>
    </lineage>
</organism>
<sequence>MEIQFGNQRCRMVNSGGFLATDGSHLKEMETDDVLVEFLNIEHQLFIRNIRAIVKIADTTVLPSASDKKLLYYVFDETRVRINDTPVIFSKLEEDNANVNEGSKMGVMTVPNTPQKPNLQQQKFEAINANEDQIDYSSNLEQNYNSLIRQGSDQVIPLSRFASEKSALELEKELFSERIPESQSAAEPVLKVENSENDLDEKLVLDGQHVEGDHSSDTEEEVVSEDQKQLNKTDDESTFIESHQIYIQGETKSPSSVSQSLSGDPSLKPAEVFDRKQSAEINSPIEKDVNPQQNISDSSIKNNSIHSDEVNPEVRPDLTPSNENEESKRSAPEIALKEKESTSQDESNREAEEAPISTNYSFPSSSLEDQPDKNVQSSAVENKNKHTNLVTSSFNLTKPMKSFIRRNGLRVQESVTDETDFVILGSPPLRRTHKFLLATSLGIPLVSSQYLTDCIKSGKVLDFRSYKYKDEEAEAKWGFRLDDIHRRTCFNGKRLYITKAIRDSMVGDSIHGLYSILETSGAEIVGDIKRAQEKDTIILAQPDNDQEGRNMSATGLNVYKIELVALSILRDRIDFDEFLIDYDADSPTKVIGKRNVSKASRTGQGRKRSSRSSWNKPSAKEQRT</sequence>
<comment type="function">
    <text evidence="6">Involved in DNA damage response (DDR) mediated through its interaction with phosphorylated H2A proteins hta1 and hta2 which mark the discrete foci of DNA damage.</text>
</comment>
<comment type="subunit">
    <text evidence="6 7">Homodimer (PubMed:26160178). Interacts (via BRCT domain) with hta1 peptide containing the S/T-Q motif in vitro; this interaction requires phosphorylation of the hta1 peptide at the S/T-Q motif (PubMed:24806815, PubMed:26160178).</text>
</comment>
<comment type="subcellular location">
    <subcellularLocation>
        <location evidence="4 6 7">Nucleus</location>
    </subcellularLocation>
    <subcellularLocation>
        <location evidence="6 7">Chromosome</location>
    </subcellularLocation>
    <subcellularLocation>
        <location evidence="6 7">Cytoplasm</location>
        <location evidence="6 7">Cytoskeleton</location>
        <location evidence="6 7">Spindle</location>
    </subcellularLocation>
    <text evidence="6 7">Associated with chromatin. Relocalizes to discrete nuclear foci at DNA double strand breaks (DSBs) following DNA damage by the HO endonuclease and ionizing radiation (IR). Focus formation requires interaction with phosphorylated hta1 and hta2. During mitosis, localizes to spindles and concentrates at spindle midzones at late mitosis. Localization to spindle midzones requires ase1, but does not require phosphorylated hta1 nor hta2 (PubMed:24806815). Localizes to spindle midzones in anaphase (PubMed:26160178).</text>
</comment>
<comment type="domain">
    <text evidence="7">The N-terminus adopts a forkhead-associated (FHA) like fold.</text>
</comment>
<comment type="domain">
    <text evidence="1 6">BRCT domain is characteristic of proteins involved in DNA damage signaling (By similarity). It is required for localization to chromatin which flanks sites of DNA damage marked by phosphorylation of hta1 and hta2.</text>
</comment>
<comment type="disruption phenotype">
    <text evidence="6">Strongly resistant to the microtubule depolymerizing drug thiabendazole (TBZ). No effect on DNA damage sensitivity in response to ionizing radiation (IR), ultraviolet (UV), hydroxyurea (HU) or camptothecin (CPT) compared to wild-type.</text>
</comment>
<keyword id="KW-0002">3D-structure</keyword>
<keyword id="KW-0131">Cell cycle</keyword>
<keyword id="KW-0158">Chromosome</keyword>
<keyword id="KW-0963">Cytoplasm</keyword>
<keyword id="KW-0206">Cytoskeleton</keyword>
<keyword id="KW-0227">DNA damage</keyword>
<keyword id="KW-0539">Nucleus</keyword>
<keyword id="KW-0597">Phosphoprotein</keyword>
<keyword id="KW-1185">Reference proteome</keyword>